<gene>
    <name evidence="1" type="primary">deoC</name>
    <name type="ordered locus">lwe2015</name>
</gene>
<organism>
    <name type="scientific">Listeria welshimeri serovar 6b (strain ATCC 35897 / DSM 20650 / CCUG 15529 / CIP 8149 / NCTC 11857 / SLCC 5334 / V8)</name>
    <dbReference type="NCBI Taxonomy" id="386043"/>
    <lineage>
        <taxon>Bacteria</taxon>
        <taxon>Bacillati</taxon>
        <taxon>Bacillota</taxon>
        <taxon>Bacilli</taxon>
        <taxon>Bacillales</taxon>
        <taxon>Listeriaceae</taxon>
        <taxon>Listeria</taxon>
    </lineage>
</organism>
<evidence type="ECO:0000255" key="1">
    <source>
        <dbReference type="HAMAP-Rule" id="MF_00114"/>
    </source>
</evidence>
<comment type="function">
    <text evidence="1">Catalyzes a reversible aldol reaction between acetaldehyde and D-glyceraldehyde 3-phosphate to generate 2-deoxy-D-ribose 5-phosphate.</text>
</comment>
<comment type="catalytic activity">
    <reaction evidence="1">
        <text>2-deoxy-D-ribose 5-phosphate = D-glyceraldehyde 3-phosphate + acetaldehyde</text>
        <dbReference type="Rhea" id="RHEA:12821"/>
        <dbReference type="ChEBI" id="CHEBI:15343"/>
        <dbReference type="ChEBI" id="CHEBI:59776"/>
        <dbReference type="ChEBI" id="CHEBI:62877"/>
        <dbReference type="EC" id="4.1.2.4"/>
    </reaction>
</comment>
<comment type="pathway">
    <text evidence="1">Carbohydrate degradation; 2-deoxy-D-ribose 1-phosphate degradation; D-glyceraldehyde 3-phosphate and acetaldehyde from 2-deoxy-alpha-D-ribose 1-phosphate: step 2/2.</text>
</comment>
<comment type="subcellular location">
    <subcellularLocation>
        <location evidence="1">Cytoplasm</location>
    </subcellularLocation>
</comment>
<comment type="similarity">
    <text evidence="1">Belongs to the DeoC/FbaB aldolase family. DeoC type 1 subfamily.</text>
</comment>
<keyword id="KW-0963">Cytoplasm</keyword>
<keyword id="KW-0456">Lyase</keyword>
<keyword id="KW-0704">Schiff base</keyword>
<accession>A0AKA1</accession>
<reference key="1">
    <citation type="journal article" date="2006" name="J. Bacteriol.">
        <title>Whole-genome sequence of Listeria welshimeri reveals common steps in genome reduction with Listeria innocua as compared to Listeria monocytogenes.</title>
        <authorList>
            <person name="Hain T."/>
            <person name="Steinweg C."/>
            <person name="Kuenne C.T."/>
            <person name="Billion A."/>
            <person name="Ghai R."/>
            <person name="Chatterjee S.S."/>
            <person name="Domann E."/>
            <person name="Kaerst U."/>
            <person name="Goesmann A."/>
            <person name="Bekel T."/>
            <person name="Bartels D."/>
            <person name="Kaiser O."/>
            <person name="Meyer F."/>
            <person name="Puehler A."/>
            <person name="Weisshaar B."/>
            <person name="Wehland J."/>
            <person name="Liang C."/>
            <person name="Dandekar T."/>
            <person name="Lampidis R."/>
            <person name="Kreft J."/>
            <person name="Goebel W."/>
            <person name="Chakraborty T."/>
        </authorList>
    </citation>
    <scope>NUCLEOTIDE SEQUENCE [LARGE SCALE GENOMIC DNA]</scope>
    <source>
        <strain>ATCC 35897 / DSM 20650 / CCUG 15529 / CIP 8149 / NCTC 11857 / SLCC 5334 / V8</strain>
    </source>
</reference>
<protein>
    <recommendedName>
        <fullName evidence="1">Deoxyribose-phosphate aldolase</fullName>
        <shortName evidence="1">DERA</shortName>
        <ecNumber evidence="1">4.1.2.4</ecNumber>
    </recommendedName>
    <alternativeName>
        <fullName evidence="1">2-deoxy-D-ribose 5-phosphate aldolase</fullName>
    </alternativeName>
    <alternativeName>
        <fullName evidence="1">Phosphodeoxyriboaldolase</fullName>
        <shortName evidence="1">Deoxyriboaldolase</shortName>
    </alternativeName>
</protein>
<name>DEOC_LISW6</name>
<proteinExistence type="inferred from homology"/>
<dbReference type="EC" id="4.1.2.4" evidence="1"/>
<dbReference type="EMBL" id="AM263198">
    <property type="protein sequence ID" value="CAK21433.1"/>
    <property type="molecule type" value="Genomic_DNA"/>
</dbReference>
<dbReference type="RefSeq" id="WP_011702780.1">
    <property type="nucleotide sequence ID" value="NC_008555.1"/>
</dbReference>
<dbReference type="SMR" id="A0AKA1"/>
<dbReference type="STRING" id="386043.lwe2015"/>
<dbReference type="GeneID" id="61189915"/>
<dbReference type="KEGG" id="lwe:lwe2015"/>
<dbReference type="eggNOG" id="COG0274">
    <property type="taxonomic scope" value="Bacteria"/>
</dbReference>
<dbReference type="HOGENOM" id="CLU_053595_0_1_9"/>
<dbReference type="OrthoDB" id="9778711at2"/>
<dbReference type="UniPathway" id="UPA00002">
    <property type="reaction ID" value="UER00468"/>
</dbReference>
<dbReference type="Proteomes" id="UP000000779">
    <property type="component" value="Chromosome"/>
</dbReference>
<dbReference type="GO" id="GO:0005737">
    <property type="term" value="C:cytoplasm"/>
    <property type="evidence" value="ECO:0007669"/>
    <property type="project" value="UniProtKB-SubCell"/>
</dbReference>
<dbReference type="GO" id="GO:0004139">
    <property type="term" value="F:deoxyribose-phosphate aldolase activity"/>
    <property type="evidence" value="ECO:0007669"/>
    <property type="project" value="UniProtKB-UniRule"/>
</dbReference>
<dbReference type="GO" id="GO:0006018">
    <property type="term" value="P:2-deoxyribose 1-phosphate catabolic process"/>
    <property type="evidence" value="ECO:0007669"/>
    <property type="project" value="UniProtKB-UniRule"/>
</dbReference>
<dbReference type="GO" id="GO:0016052">
    <property type="term" value="P:carbohydrate catabolic process"/>
    <property type="evidence" value="ECO:0007669"/>
    <property type="project" value="TreeGrafter"/>
</dbReference>
<dbReference type="GO" id="GO:0009264">
    <property type="term" value="P:deoxyribonucleotide catabolic process"/>
    <property type="evidence" value="ECO:0007669"/>
    <property type="project" value="InterPro"/>
</dbReference>
<dbReference type="CDD" id="cd00959">
    <property type="entry name" value="DeoC"/>
    <property type="match status" value="1"/>
</dbReference>
<dbReference type="FunFam" id="3.20.20.70:FF:000044">
    <property type="entry name" value="Deoxyribose-phosphate aldolase"/>
    <property type="match status" value="1"/>
</dbReference>
<dbReference type="Gene3D" id="3.20.20.70">
    <property type="entry name" value="Aldolase class I"/>
    <property type="match status" value="1"/>
</dbReference>
<dbReference type="HAMAP" id="MF_00114">
    <property type="entry name" value="DeoC_type1"/>
    <property type="match status" value="1"/>
</dbReference>
<dbReference type="InterPro" id="IPR013785">
    <property type="entry name" value="Aldolase_TIM"/>
</dbReference>
<dbReference type="InterPro" id="IPR011343">
    <property type="entry name" value="DeoC"/>
</dbReference>
<dbReference type="InterPro" id="IPR002915">
    <property type="entry name" value="DeoC/FbaB/LacD_aldolase"/>
</dbReference>
<dbReference type="InterPro" id="IPR028581">
    <property type="entry name" value="DeoC_typeI"/>
</dbReference>
<dbReference type="NCBIfam" id="TIGR00126">
    <property type="entry name" value="deoC"/>
    <property type="match status" value="1"/>
</dbReference>
<dbReference type="PANTHER" id="PTHR10889">
    <property type="entry name" value="DEOXYRIBOSE-PHOSPHATE ALDOLASE"/>
    <property type="match status" value="1"/>
</dbReference>
<dbReference type="PANTHER" id="PTHR10889:SF1">
    <property type="entry name" value="DEOXYRIBOSE-PHOSPHATE ALDOLASE"/>
    <property type="match status" value="1"/>
</dbReference>
<dbReference type="Pfam" id="PF01791">
    <property type="entry name" value="DeoC"/>
    <property type="match status" value="1"/>
</dbReference>
<dbReference type="PIRSF" id="PIRSF001357">
    <property type="entry name" value="DeoC"/>
    <property type="match status" value="1"/>
</dbReference>
<dbReference type="SMART" id="SM01133">
    <property type="entry name" value="DeoC"/>
    <property type="match status" value="1"/>
</dbReference>
<dbReference type="SUPFAM" id="SSF51569">
    <property type="entry name" value="Aldolase"/>
    <property type="match status" value="1"/>
</dbReference>
<sequence>MTIAKMIDHTALKPDTTKEQILTLTKEAREYGFASVCVNPTWVKLSAEQLAGAESVVCTVIGFPLGANTPEVKAFEVKDAIQNGAKEVDMVINIGALKDKDNELVERDIRAVVDAAKGKALVKVIIETCLLTDEEKVRACEIAVKAGTDFVKTSTGFSTGGATAEDIALMRKTVGQNIGVKASGGVRTKEDVEKMIEAGATRIGASAGVAIVSGEKPAKPDNY</sequence>
<feature type="chain" id="PRO_1000015323" description="Deoxyribose-phosphate aldolase">
    <location>
        <begin position="1"/>
        <end position="223"/>
    </location>
</feature>
<feature type="active site" description="Proton donor/acceptor" evidence="1">
    <location>
        <position position="89"/>
    </location>
</feature>
<feature type="active site" description="Schiff-base intermediate with acetaldehyde" evidence="1">
    <location>
        <position position="152"/>
    </location>
</feature>
<feature type="active site" description="Proton donor/acceptor" evidence="1">
    <location>
        <position position="181"/>
    </location>
</feature>